<name>NUOA_ACIF5</name>
<reference key="1">
    <citation type="submission" date="2008-08" db="EMBL/GenBank/DDBJ databases">
        <title>Complete sequence of Acidithiobacillus ferrooxidans ATCC 53993.</title>
        <authorList>
            <person name="Lucas S."/>
            <person name="Copeland A."/>
            <person name="Lapidus A."/>
            <person name="Glavina del Rio T."/>
            <person name="Dalin E."/>
            <person name="Tice H."/>
            <person name="Bruce D."/>
            <person name="Goodwin L."/>
            <person name="Pitluck S."/>
            <person name="Sims D."/>
            <person name="Brettin T."/>
            <person name="Detter J.C."/>
            <person name="Han C."/>
            <person name="Kuske C.R."/>
            <person name="Larimer F."/>
            <person name="Land M."/>
            <person name="Hauser L."/>
            <person name="Kyrpides N."/>
            <person name="Lykidis A."/>
            <person name="Borole A.P."/>
        </authorList>
    </citation>
    <scope>NUCLEOTIDE SEQUENCE [LARGE SCALE GENOMIC DNA]</scope>
    <source>
        <strain>ATCC 53993 / BNL-5-31</strain>
    </source>
</reference>
<comment type="function">
    <text evidence="1">NDH-1 shuttles electrons from NADH, via FMN and iron-sulfur (Fe-S) centers, to quinones in the respiratory chain. The immediate electron acceptor for the enzyme in this species is believed to be ubiquinone. Couples the redox reaction to proton translocation (for every two electrons transferred, four hydrogen ions are translocated across the cytoplasmic membrane), and thus conserves the redox energy in a proton gradient.</text>
</comment>
<comment type="catalytic activity">
    <reaction evidence="1">
        <text>a quinone + NADH + 5 H(+)(in) = a quinol + NAD(+) + 4 H(+)(out)</text>
        <dbReference type="Rhea" id="RHEA:57888"/>
        <dbReference type="ChEBI" id="CHEBI:15378"/>
        <dbReference type="ChEBI" id="CHEBI:24646"/>
        <dbReference type="ChEBI" id="CHEBI:57540"/>
        <dbReference type="ChEBI" id="CHEBI:57945"/>
        <dbReference type="ChEBI" id="CHEBI:132124"/>
    </reaction>
</comment>
<comment type="subunit">
    <text evidence="1">NDH-1 is composed of 14 different subunits. Subunits NuoA, H, J, K, L, M, N constitute the membrane sector of the complex.</text>
</comment>
<comment type="subcellular location">
    <subcellularLocation>
        <location evidence="1">Cell inner membrane</location>
        <topology evidence="1">Multi-pass membrane protein</topology>
    </subcellularLocation>
</comment>
<comment type="similarity">
    <text evidence="1">Belongs to the complex I subunit 3 family.</text>
</comment>
<dbReference type="EC" id="7.1.1.-" evidence="1"/>
<dbReference type="EMBL" id="CP001132">
    <property type="protein sequence ID" value="ACH84460.1"/>
    <property type="molecule type" value="Genomic_DNA"/>
</dbReference>
<dbReference type="RefSeq" id="WP_009566650.1">
    <property type="nucleotide sequence ID" value="NC_011206.1"/>
</dbReference>
<dbReference type="SMR" id="B5EN71"/>
<dbReference type="KEGG" id="afe:Lferr_2257"/>
<dbReference type="eggNOG" id="COG0838">
    <property type="taxonomic scope" value="Bacteria"/>
</dbReference>
<dbReference type="HOGENOM" id="CLU_119549_3_1_6"/>
<dbReference type="GO" id="GO:0030964">
    <property type="term" value="C:NADH dehydrogenase complex"/>
    <property type="evidence" value="ECO:0007669"/>
    <property type="project" value="TreeGrafter"/>
</dbReference>
<dbReference type="GO" id="GO:0005886">
    <property type="term" value="C:plasma membrane"/>
    <property type="evidence" value="ECO:0007669"/>
    <property type="project" value="UniProtKB-SubCell"/>
</dbReference>
<dbReference type="GO" id="GO:0008137">
    <property type="term" value="F:NADH dehydrogenase (ubiquinone) activity"/>
    <property type="evidence" value="ECO:0007669"/>
    <property type="project" value="InterPro"/>
</dbReference>
<dbReference type="GO" id="GO:0050136">
    <property type="term" value="F:NADH:ubiquinone reductase (non-electrogenic) activity"/>
    <property type="evidence" value="ECO:0007669"/>
    <property type="project" value="UniProtKB-UniRule"/>
</dbReference>
<dbReference type="GO" id="GO:0048038">
    <property type="term" value="F:quinone binding"/>
    <property type="evidence" value="ECO:0007669"/>
    <property type="project" value="UniProtKB-KW"/>
</dbReference>
<dbReference type="FunFam" id="1.20.58.1610:FF:000004">
    <property type="entry name" value="NADH-quinone oxidoreductase subunit A"/>
    <property type="match status" value="1"/>
</dbReference>
<dbReference type="Gene3D" id="1.20.58.1610">
    <property type="entry name" value="NADH:ubiquinone/plastoquinone oxidoreductase, chain 3"/>
    <property type="match status" value="1"/>
</dbReference>
<dbReference type="HAMAP" id="MF_01394">
    <property type="entry name" value="NDH1_NuoA"/>
    <property type="match status" value="1"/>
</dbReference>
<dbReference type="InterPro" id="IPR023043">
    <property type="entry name" value="NAD(P)H_OxRDtase_bac/plastid"/>
</dbReference>
<dbReference type="InterPro" id="IPR000440">
    <property type="entry name" value="NADH_UbQ/plastoQ_OxRdtase_su3"/>
</dbReference>
<dbReference type="InterPro" id="IPR038430">
    <property type="entry name" value="NDAH_ubi_oxred_su3_sf"/>
</dbReference>
<dbReference type="PANTHER" id="PTHR11058">
    <property type="entry name" value="NADH-UBIQUINONE OXIDOREDUCTASE CHAIN 3"/>
    <property type="match status" value="1"/>
</dbReference>
<dbReference type="PANTHER" id="PTHR11058:SF9">
    <property type="entry name" value="NADH-UBIQUINONE OXIDOREDUCTASE CHAIN 3"/>
    <property type="match status" value="1"/>
</dbReference>
<dbReference type="Pfam" id="PF00507">
    <property type="entry name" value="Oxidored_q4"/>
    <property type="match status" value="1"/>
</dbReference>
<organism>
    <name type="scientific">Acidithiobacillus ferrooxidans (strain ATCC 53993 / BNL-5-31)</name>
    <name type="common">Leptospirillum ferrooxidans (ATCC 53993)</name>
    <dbReference type="NCBI Taxonomy" id="380394"/>
    <lineage>
        <taxon>Bacteria</taxon>
        <taxon>Pseudomonadati</taxon>
        <taxon>Pseudomonadota</taxon>
        <taxon>Acidithiobacillia</taxon>
        <taxon>Acidithiobacillales</taxon>
        <taxon>Acidithiobacillaceae</taxon>
        <taxon>Acidithiobacillus</taxon>
    </lineage>
</organism>
<proteinExistence type="inferred from homology"/>
<accession>B5EN71</accession>
<gene>
    <name evidence="1" type="primary">nuoA</name>
    <name type="ordered locus">Lferr_2257</name>
</gene>
<protein>
    <recommendedName>
        <fullName evidence="1">NADH-quinone oxidoreductase subunit A</fullName>
        <ecNumber evidence="1">7.1.1.-</ecNumber>
    </recommendedName>
    <alternativeName>
        <fullName evidence="1">NADH dehydrogenase I subunit A</fullName>
    </alternativeName>
    <alternativeName>
        <fullName evidence="1">NDH-1 subunit A</fullName>
    </alternativeName>
    <alternativeName>
        <fullName evidence="1">NUO1</fullName>
    </alternativeName>
</protein>
<evidence type="ECO:0000255" key="1">
    <source>
        <dbReference type="HAMAP-Rule" id="MF_01394"/>
    </source>
</evidence>
<feature type="chain" id="PRO_5000395043" description="NADH-quinone oxidoreductase subunit A">
    <location>
        <begin position="1"/>
        <end position="118"/>
    </location>
</feature>
<feature type="transmembrane region" description="Helical" evidence="1">
    <location>
        <begin position="6"/>
        <end position="26"/>
    </location>
</feature>
<feature type="transmembrane region" description="Helical" evidence="1">
    <location>
        <begin position="64"/>
        <end position="84"/>
    </location>
</feature>
<feature type="transmembrane region" description="Helical" evidence="1">
    <location>
        <begin position="87"/>
        <end position="107"/>
    </location>
</feature>
<sequence>MLNHYLPVLIFLLVALVVGVAPLLMGSSLGPHRPDSEKLSPYECGFEAFEDARMKFDVRYYLVAILFILFDLEIAFLFPWAVVFDQIGMTGFLAMMLFLAILVVGFIYEWKKGALEWE</sequence>
<keyword id="KW-0997">Cell inner membrane</keyword>
<keyword id="KW-1003">Cell membrane</keyword>
<keyword id="KW-0472">Membrane</keyword>
<keyword id="KW-0520">NAD</keyword>
<keyword id="KW-0874">Quinone</keyword>
<keyword id="KW-1278">Translocase</keyword>
<keyword id="KW-0812">Transmembrane</keyword>
<keyword id="KW-1133">Transmembrane helix</keyword>
<keyword id="KW-0813">Transport</keyword>
<keyword id="KW-0830">Ubiquinone</keyword>